<evidence type="ECO:0000255" key="1">
    <source>
        <dbReference type="HAMAP-Rule" id="MF_00268"/>
    </source>
</evidence>
<name>RECA_ALISL</name>
<protein>
    <recommendedName>
        <fullName evidence="1">Protein RecA</fullName>
    </recommendedName>
    <alternativeName>
        <fullName evidence="1">Recombinase A</fullName>
    </alternativeName>
</protein>
<organism>
    <name type="scientific">Aliivibrio salmonicida (strain LFI1238)</name>
    <name type="common">Vibrio salmonicida (strain LFI1238)</name>
    <dbReference type="NCBI Taxonomy" id="316275"/>
    <lineage>
        <taxon>Bacteria</taxon>
        <taxon>Pseudomonadati</taxon>
        <taxon>Pseudomonadota</taxon>
        <taxon>Gammaproteobacteria</taxon>
        <taxon>Vibrionales</taxon>
        <taxon>Vibrionaceae</taxon>
        <taxon>Aliivibrio</taxon>
    </lineage>
</organism>
<accession>B6ENH8</accession>
<proteinExistence type="inferred from homology"/>
<feature type="chain" id="PRO_1000114311" description="Protein RecA">
    <location>
        <begin position="1"/>
        <end position="347"/>
    </location>
</feature>
<feature type="binding site" evidence="1">
    <location>
        <begin position="65"/>
        <end position="72"/>
    </location>
    <ligand>
        <name>ATP</name>
        <dbReference type="ChEBI" id="CHEBI:30616"/>
    </ligand>
</feature>
<keyword id="KW-0067">ATP-binding</keyword>
<keyword id="KW-0963">Cytoplasm</keyword>
<keyword id="KW-0227">DNA damage</keyword>
<keyword id="KW-0233">DNA recombination</keyword>
<keyword id="KW-0234">DNA repair</keyword>
<keyword id="KW-0238">DNA-binding</keyword>
<keyword id="KW-0547">Nucleotide-binding</keyword>
<keyword id="KW-0742">SOS response</keyword>
<reference key="1">
    <citation type="journal article" date="2008" name="BMC Genomics">
        <title>The genome sequence of the fish pathogen Aliivibrio salmonicida strain LFI1238 shows extensive evidence of gene decay.</title>
        <authorList>
            <person name="Hjerde E."/>
            <person name="Lorentzen M.S."/>
            <person name="Holden M.T."/>
            <person name="Seeger K."/>
            <person name="Paulsen S."/>
            <person name="Bason N."/>
            <person name="Churcher C."/>
            <person name="Harris D."/>
            <person name="Norbertczak H."/>
            <person name="Quail M.A."/>
            <person name="Sanders S."/>
            <person name="Thurston S."/>
            <person name="Parkhill J."/>
            <person name="Willassen N.P."/>
            <person name="Thomson N.R."/>
        </authorList>
    </citation>
    <scope>NUCLEOTIDE SEQUENCE [LARGE SCALE GENOMIC DNA]</scope>
    <source>
        <strain>LFI1238</strain>
    </source>
</reference>
<gene>
    <name evidence="1" type="primary">recA</name>
    <name type="ordered locus">VSAL_I0634</name>
</gene>
<sequence>MDDNKKKALAAALGQIEKQFGKGSIMKLGDNRTMDVETVSTGSLSLDIALGAGGLPMGRIVEIYGPESSGKTTLTLEVIAQAQKAGKTCAFIDAEHALDPIYAQKLGVDIDQLLCSQPDTGEQALEIVDALARSGAVDLIVVDSVAALTPKAEIEGEMGDSHMGLQARMLSQAMRKLTGNLKQSNCMCIFINQIRMKIGVMFGNPETTTGGNALKFYASVRLDIRRTGAVKDGDEVVGNETRIKVVKNKIAAPFKQAETQILYGKGFNREGELIDLGVKHKLVDKAGAWYSYNGDKIGQGKANASKFMRENPEIGAELDKKLREMLLTPTEDKPEVVEKIEEENEEF</sequence>
<dbReference type="EMBL" id="FM178379">
    <property type="protein sequence ID" value="CAQ78319.1"/>
    <property type="molecule type" value="Genomic_DNA"/>
</dbReference>
<dbReference type="RefSeq" id="WP_012549441.1">
    <property type="nucleotide sequence ID" value="NC_011312.1"/>
</dbReference>
<dbReference type="SMR" id="B6ENH8"/>
<dbReference type="KEGG" id="vsa:VSAL_I0634"/>
<dbReference type="eggNOG" id="COG0468">
    <property type="taxonomic scope" value="Bacteria"/>
</dbReference>
<dbReference type="HOGENOM" id="CLU_040469_3_2_6"/>
<dbReference type="Proteomes" id="UP000001730">
    <property type="component" value="Chromosome 1"/>
</dbReference>
<dbReference type="GO" id="GO:0005829">
    <property type="term" value="C:cytosol"/>
    <property type="evidence" value="ECO:0007669"/>
    <property type="project" value="TreeGrafter"/>
</dbReference>
<dbReference type="GO" id="GO:0005524">
    <property type="term" value="F:ATP binding"/>
    <property type="evidence" value="ECO:0007669"/>
    <property type="project" value="UniProtKB-UniRule"/>
</dbReference>
<dbReference type="GO" id="GO:0016887">
    <property type="term" value="F:ATP hydrolysis activity"/>
    <property type="evidence" value="ECO:0007669"/>
    <property type="project" value="InterPro"/>
</dbReference>
<dbReference type="GO" id="GO:0140664">
    <property type="term" value="F:ATP-dependent DNA damage sensor activity"/>
    <property type="evidence" value="ECO:0007669"/>
    <property type="project" value="InterPro"/>
</dbReference>
<dbReference type="GO" id="GO:0003684">
    <property type="term" value="F:damaged DNA binding"/>
    <property type="evidence" value="ECO:0007669"/>
    <property type="project" value="UniProtKB-UniRule"/>
</dbReference>
<dbReference type="GO" id="GO:0003697">
    <property type="term" value="F:single-stranded DNA binding"/>
    <property type="evidence" value="ECO:0007669"/>
    <property type="project" value="UniProtKB-UniRule"/>
</dbReference>
<dbReference type="GO" id="GO:0006310">
    <property type="term" value="P:DNA recombination"/>
    <property type="evidence" value="ECO:0007669"/>
    <property type="project" value="UniProtKB-UniRule"/>
</dbReference>
<dbReference type="GO" id="GO:0006281">
    <property type="term" value="P:DNA repair"/>
    <property type="evidence" value="ECO:0007669"/>
    <property type="project" value="UniProtKB-UniRule"/>
</dbReference>
<dbReference type="GO" id="GO:0009432">
    <property type="term" value="P:SOS response"/>
    <property type="evidence" value="ECO:0007669"/>
    <property type="project" value="UniProtKB-UniRule"/>
</dbReference>
<dbReference type="CDD" id="cd00983">
    <property type="entry name" value="RecA"/>
    <property type="match status" value="1"/>
</dbReference>
<dbReference type="FunFam" id="3.40.50.300:FF:000087">
    <property type="entry name" value="Recombinase RecA"/>
    <property type="match status" value="1"/>
</dbReference>
<dbReference type="Gene3D" id="3.40.50.300">
    <property type="entry name" value="P-loop containing nucleotide triphosphate hydrolases"/>
    <property type="match status" value="1"/>
</dbReference>
<dbReference type="HAMAP" id="MF_00268">
    <property type="entry name" value="RecA"/>
    <property type="match status" value="1"/>
</dbReference>
<dbReference type="InterPro" id="IPR003593">
    <property type="entry name" value="AAA+_ATPase"/>
</dbReference>
<dbReference type="InterPro" id="IPR013765">
    <property type="entry name" value="DNA_recomb/repair_RecA"/>
</dbReference>
<dbReference type="InterPro" id="IPR020584">
    <property type="entry name" value="DNA_recomb/repair_RecA_CS"/>
</dbReference>
<dbReference type="InterPro" id="IPR027417">
    <property type="entry name" value="P-loop_NTPase"/>
</dbReference>
<dbReference type="InterPro" id="IPR049261">
    <property type="entry name" value="RecA-like_C"/>
</dbReference>
<dbReference type="InterPro" id="IPR049428">
    <property type="entry name" value="RecA-like_N"/>
</dbReference>
<dbReference type="InterPro" id="IPR020588">
    <property type="entry name" value="RecA_ATP-bd"/>
</dbReference>
<dbReference type="InterPro" id="IPR023400">
    <property type="entry name" value="RecA_C_sf"/>
</dbReference>
<dbReference type="InterPro" id="IPR020587">
    <property type="entry name" value="RecA_monomer-monomer_interface"/>
</dbReference>
<dbReference type="NCBIfam" id="TIGR02012">
    <property type="entry name" value="tigrfam_recA"/>
    <property type="match status" value="1"/>
</dbReference>
<dbReference type="PANTHER" id="PTHR45900:SF1">
    <property type="entry name" value="MITOCHONDRIAL DNA REPAIR PROTEIN RECA HOMOLOG-RELATED"/>
    <property type="match status" value="1"/>
</dbReference>
<dbReference type="PANTHER" id="PTHR45900">
    <property type="entry name" value="RECA"/>
    <property type="match status" value="1"/>
</dbReference>
<dbReference type="Pfam" id="PF00154">
    <property type="entry name" value="RecA"/>
    <property type="match status" value="1"/>
</dbReference>
<dbReference type="Pfam" id="PF21096">
    <property type="entry name" value="RecA_C"/>
    <property type="match status" value="1"/>
</dbReference>
<dbReference type="PRINTS" id="PR00142">
    <property type="entry name" value="RECA"/>
</dbReference>
<dbReference type="SMART" id="SM00382">
    <property type="entry name" value="AAA"/>
    <property type="match status" value="1"/>
</dbReference>
<dbReference type="SUPFAM" id="SSF52540">
    <property type="entry name" value="P-loop containing nucleoside triphosphate hydrolases"/>
    <property type="match status" value="1"/>
</dbReference>
<dbReference type="SUPFAM" id="SSF54752">
    <property type="entry name" value="RecA protein, C-terminal domain"/>
    <property type="match status" value="1"/>
</dbReference>
<dbReference type="PROSITE" id="PS00321">
    <property type="entry name" value="RECA_1"/>
    <property type="match status" value="1"/>
</dbReference>
<dbReference type="PROSITE" id="PS50162">
    <property type="entry name" value="RECA_2"/>
    <property type="match status" value="1"/>
</dbReference>
<dbReference type="PROSITE" id="PS50163">
    <property type="entry name" value="RECA_3"/>
    <property type="match status" value="1"/>
</dbReference>
<comment type="function">
    <text evidence="1">Can catalyze the hydrolysis of ATP in the presence of single-stranded DNA, the ATP-dependent uptake of single-stranded DNA by duplex DNA, and the ATP-dependent hybridization of homologous single-stranded DNAs. It interacts with LexA causing its activation and leading to its autocatalytic cleavage.</text>
</comment>
<comment type="subcellular location">
    <subcellularLocation>
        <location evidence="1">Cytoplasm</location>
    </subcellularLocation>
</comment>
<comment type="similarity">
    <text evidence="1">Belongs to the RecA family.</text>
</comment>